<protein>
    <recommendedName>
        <fullName>Zinc finger C2H2 protein ECU10_0150</fullName>
    </recommendedName>
</protein>
<sequence>MDTKGSLADKIDIFFLLKQQKLITKKELGMLLPTQSYEDYRVNYYRRRVPEVFDRNFRKEWFIYRYLDDFFCEERRKAIWNIYSFKIEGPCIIARNISDDVPGSVINSAFSQCVNLERFWIQHQTSQNGFSRLCYIILKKEASVQESIDFMRSVLDRKLGIELEEFDISGVVEPKILSDCNDYDTAMSIFSSMCRMFDINEEEVLKKYSSALGDTSTRQNTAEFICNALKNVFLYCYTCAHQYDDPLEMMMGCRNHKTTDAAARRREFLSSHQEFGYLDVKTKEEELNNMTTIVNENHYKCGFCGKAFESEKFIFNHFNNKHENEIRRIEKGIENFKKFICRIDCFVLGIIEGTDDDRIPKFILPNIKDDRVVYDMGAVFSGEIAIGK</sequence>
<gene>
    <name type="ordered locus">ECU10_0150</name>
</gene>
<organism>
    <name type="scientific">Encephalitozoon cuniculi (strain GB-M1)</name>
    <name type="common">Microsporidian parasite</name>
    <dbReference type="NCBI Taxonomy" id="284813"/>
    <lineage>
        <taxon>Eukaryota</taxon>
        <taxon>Fungi</taxon>
        <taxon>Fungi incertae sedis</taxon>
        <taxon>Microsporidia</taxon>
        <taxon>Unikaryonidae</taxon>
        <taxon>Encephalitozoon</taxon>
    </lineage>
</organism>
<proteinExistence type="predicted"/>
<name>ZA15_ENCCU</name>
<keyword id="KW-0479">Metal-binding</keyword>
<keyword id="KW-1185">Reference proteome</keyword>
<keyword id="KW-0862">Zinc</keyword>
<keyword id="KW-0863">Zinc-finger</keyword>
<feature type="chain" id="PRO_0000047831" description="Zinc finger C2H2 protein ECU10_0150">
    <location>
        <begin position="1"/>
        <end position="388"/>
    </location>
</feature>
<feature type="zinc finger region" description="C2H2-type" evidence="1">
    <location>
        <begin position="299"/>
        <end position="322"/>
    </location>
</feature>
<reference key="1">
    <citation type="journal article" date="2001" name="Nature">
        <title>Genome sequence and gene compaction of the eukaryote parasite Encephalitozoon cuniculi.</title>
        <authorList>
            <person name="Katinka M.D."/>
            <person name="Duprat S."/>
            <person name="Cornillot E."/>
            <person name="Metenier G."/>
            <person name="Thomarat F."/>
            <person name="Prensier G."/>
            <person name="Barbe V."/>
            <person name="Peyretaillade E."/>
            <person name="Brottier P."/>
            <person name="Wincker P."/>
            <person name="Delbac F."/>
            <person name="El Alaoui H."/>
            <person name="Peyret P."/>
            <person name="Saurin W."/>
            <person name="Gouy M."/>
            <person name="Weissenbach J."/>
            <person name="Vivares C.P."/>
        </authorList>
    </citation>
    <scope>NUCLEOTIDE SEQUENCE [LARGE SCALE GENOMIC DNA]</scope>
    <source>
        <strain>GB-M1</strain>
    </source>
</reference>
<evidence type="ECO:0000255" key="1">
    <source>
        <dbReference type="PROSITE-ProRule" id="PRU00042"/>
    </source>
</evidence>
<dbReference type="EMBL" id="AL590449">
    <property type="protein sequence ID" value="CAD25734.1"/>
    <property type="molecule type" value="Genomic_DNA"/>
</dbReference>
<dbReference type="RefSeq" id="NP_586130.1">
    <property type="nucleotide sequence ID" value="NM_001041963.1"/>
</dbReference>
<dbReference type="STRING" id="284813.Q8SUH6"/>
<dbReference type="GeneID" id="859776"/>
<dbReference type="KEGG" id="ecu:ECU10_0150"/>
<dbReference type="VEuPathDB" id="MicrosporidiaDB:ECU10_0150"/>
<dbReference type="HOGENOM" id="CLU_056565_0_0_1"/>
<dbReference type="InParanoid" id="Q8SUH6"/>
<dbReference type="OMA" id="KHENDIN"/>
<dbReference type="OrthoDB" id="342064at2759"/>
<dbReference type="Proteomes" id="UP000000819">
    <property type="component" value="Chromosome X"/>
</dbReference>
<dbReference type="GO" id="GO:0008270">
    <property type="term" value="F:zinc ion binding"/>
    <property type="evidence" value="ECO:0007669"/>
    <property type="project" value="UniProtKB-KW"/>
</dbReference>
<dbReference type="InterPro" id="IPR013087">
    <property type="entry name" value="Znf_C2H2_type"/>
</dbReference>
<dbReference type="PROSITE" id="PS00028">
    <property type="entry name" value="ZINC_FINGER_C2H2_1"/>
    <property type="match status" value="1"/>
</dbReference>
<dbReference type="PROSITE" id="PS50157">
    <property type="entry name" value="ZINC_FINGER_C2H2_2"/>
    <property type="match status" value="1"/>
</dbReference>
<accession>Q8SUH6</accession>